<accession>Q5GC94</accession>
<sequence length="235" mass="26475">MNFNYFILVLFFITSGHAKSETRDVHQEAENHIKRGSNTGFNFKTLDKEKRSAEEQNLAEDLVKRGSNKGFNFMVDMIQALSNGKRSAEEQDLAEDLVTRGSNKGFNFMVDMINALSNGKRSAEEQDLAEDLVKRGSNKGFNFMVDMINALSNGKRSAEEQDLAEDLVTRRSNKGFNFMVDMIQALSKGKRSAEDQDLAEDLVTRGSNKGFNFMVDMIQALSKGKRSAEQEKDMK</sequence>
<name>MAXSA_BOMMX</name>
<dbReference type="EMBL" id="AY652771">
    <property type="protein sequence ID" value="AAV97979.1"/>
    <property type="molecule type" value="mRNA"/>
</dbReference>
<dbReference type="GO" id="GO:0005576">
    <property type="term" value="C:extracellular region"/>
    <property type="evidence" value="ECO:0007669"/>
    <property type="project" value="UniProtKB-SubCell"/>
</dbReference>
<dbReference type="GO" id="GO:0042742">
    <property type="term" value="P:defense response to bacterium"/>
    <property type="evidence" value="ECO:0007669"/>
    <property type="project" value="UniProtKB-KW"/>
</dbReference>
<keyword id="KW-0027">Amidation</keyword>
<keyword id="KW-0044">Antibiotic</keyword>
<keyword id="KW-0929">Antimicrobial</keyword>
<keyword id="KW-0165">Cleavage on pair of basic residues</keyword>
<keyword id="KW-0964">Secreted</keyword>
<keyword id="KW-0732">Signal</keyword>
<feature type="signal peptide" evidence="2">
    <location>
        <begin position="1"/>
        <end position="18"/>
    </location>
</feature>
<feature type="propeptide" id="PRO_0000010255">
    <location>
        <begin position="19"/>
        <end position="35"/>
    </location>
</feature>
<feature type="peptide" id="PRO_0000010256" description="Maximin-S1">
    <location>
        <begin position="36"/>
        <end position="49"/>
    </location>
</feature>
<feature type="propeptide" id="PRO_0000010257">
    <location>
        <begin position="52"/>
        <end position="65"/>
    </location>
</feature>
<feature type="peptide" id="PRO_0000010258" description="Maximin-S2">
    <location>
        <begin position="66"/>
        <end position="83"/>
    </location>
</feature>
<feature type="propeptide" id="PRO_0000010259">
    <location>
        <begin position="87"/>
        <end position="100"/>
    </location>
</feature>
<feature type="peptide" id="PRO_0000010260" description="Maximin-S3">
    <location>
        <begin position="101"/>
        <end position="118"/>
    </location>
</feature>
<feature type="propeptide" id="PRO_0000010261">
    <location>
        <begin position="122"/>
        <end position="135"/>
    </location>
</feature>
<feature type="peptide" id="PRO_0000010262" description="Maximin-S3">
    <location>
        <begin position="136"/>
        <end position="153"/>
    </location>
</feature>
<feature type="propeptide" id="PRO_0000010263">
    <location>
        <begin position="157"/>
        <end position="170"/>
    </location>
</feature>
<feature type="peptide" id="PRO_0000010264" description="Maximin-S4">
    <location>
        <begin position="171"/>
        <end position="188"/>
    </location>
</feature>
<feature type="propeptide" id="PRO_0000010265">
    <location>
        <begin position="192"/>
        <end position="205"/>
    </location>
</feature>
<feature type="peptide" id="PRO_0000010266" description="Maximin-S5">
    <location>
        <begin position="206"/>
        <end position="223"/>
    </location>
</feature>
<feature type="propeptide" id="PRO_0000010267">
    <location>
        <begin position="227"/>
        <end position="235"/>
    </location>
</feature>
<feature type="modified residue" description="Asparagine amide" evidence="3">
    <location>
        <position position="83"/>
    </location>
</feature>
<feature type="modified residue" description="Asparagine amide" evidence="3">
    <location>
        <position position="118"/>
    </location>
</feature>
<feature type="modified residue" description="Asparagine amide" evidence="3">
    <location>
        <position position="153"/>
    </location>
</feature>
<feature type="modified residue" description="Lysine amide" evidence="3">
    <location>
        <position position="188"/>
    </location>
</feature>
<feature type="modified residue" description="Lysine amide" evidence="3">
    <location>
        <position position="223"/>
    </location>
</feature>
<proteinExistence type="evidence at protein level"/>
<organism>
    <name type="scientific">Bombina maxima</name>
    <name type="common">Giant fire-bellied toad</name>
    <name type="synonym">Chinese red belly toad</name>
    <dbReference type="NCBI Taxonomy" id="161274"/>
    <lineage>
        <taxon>Eukaryota</taxon>
        <taxon>Metazoa</taxon>
        <taxon>Chordata</taxon>
        <taxon>Craniata</taxon>
        <taxon>Vertebrata</taxon>
        <taxon>Euteleostomi</taxon>
        <taxon>Amphibia</taxon>
        <taxon>Batrachia</taxon>
        <taxon>Anura</taxon>
        <taxon>Bombinatoridae</taxon>
        <taxon>Bombina</taxon>
    </lineage>
</organism>
<protein>
    <recommendedName>
        <fullName>Maximins-S type A</fullName>
    </recommendedName>
    <component>
        <recommendedName>
            <fullName>Maximin-S1</fullName>
        </recommendedName>
    </component>
    <component>
        <recommendedName>
            <fullName>Maximin-S2</fullName>
        </recommendedName>
    </component>
    <component>
        <recommendedName>
            <fullName>Maximin-S3</fullName>
        </recommendedName>
    </component>
    <component>
        <recommendedName>
            <fullName>Maximin-S4</fullName>
        </recommendedName>
    </component>
    <component>
        <recommendedName>
            <fullName>Maximin-S5</fullName>
        </recommendedName>
    </component>
</protein>
<reference key="1">
    <citation type="journal article" date="2005" name="Biochem. Biophys. Res. Commun.">
        <title>Maximins S, a novel group of antimicrobial peptides from toad Bombina maxima.</title>
        <authorList>
            <person name="Wang T."/>
            <person name="Zhang J."/>
            <person name="Shen J.-H."/>
            <person name="Jin Y."/>
            <person name="Lee W.-H."/>
            <person name="Zhang Y."/>
        </authorList>
    </citation>
    <scope>NUCLEOTIDE SEQUENCE [MRNA]</scope>
    <scope>SYNTHESIS OF MAXIMIN-S1</scope>
    <scope>SYNTHESIS OF MAXIMIN-S4</scope>
    <scope>AMIDATION AT ASN-83; ASN-118; ASN-153; LYS-188 AND LYS-223</scope>
    <scope>MASS SPECTROMETRY</scope>
    <source>
        <tissue>Skin</tissue>
        <tissue>Skin secretion</tissue>
    </source>
</reference>
<evidence type="ECO:0000250" key="1"/>
<evidence type="ECO:0000255" key="2"/>
<evidence type="ECO:0000269" key="3">
    <source>
    </source>
</evidence>
<evidence type="ECO:0000305" key="4"/>
<comment type="function">
    <text>Maximin-S1 has no antimicrobial activity. Has no hemolytic activity.</text>
</comment>
<comment type="function">
    <text evidence="1">Maximin-S2 has an activity against mycoplasma but has no activity against common Gram-positive and Gram-negative bacteria nor fungi. Has no hemolytic activity (By similarity).</text>
</comment>
<comment type="function">
    <text evidence="1">Maximin-S3 has an activity against mycoplasma but has no activity against common Gram-positive and Gram-negative bacteria nor fungi. Has no hemolytic activity (By similarity).</text>
</comment>
<comment type="function">
    <text>Maximin-S4 has an activity against mycoplasma but has no activity against common Gram-positive and Gram-negative bacteria nor fungi. Has no hemolytic activity.</text>
</comment>
<comment type="function">
    <text evidence="1">Maximin-S5 has an activity against mycoplasma but has no activity against common Gram-positive and Gram-negative bacteria nor fungi. Has no hemolytic activity (By similarity).</text>
</comment>
<comment type="subcellular location">
    <subcellularLocation>
        <location>Secreted</location>
    </subcellularLocation>
</comment>
<comment type="tissue specificity">
    <text>Expressed by the skin dorsal glands.</text>
</comment>
<comment type="mass spectrometry" mass="1973.92" method="MALDI" evidence="3">
    <molecule>Maximin-S2</molecule>
    <text>Maximin-S2.</text>
</comment>
<comment type="mass spectrometry" mass="1959.22" method="MALDI" evidence="3">
    <molecule>Maximin-S3</molecule>
    <text>Maximin-S3.</text>
</comment>
<comment type="mass spectrometry" mass="2087.9" method="MALDI" evidence="3">
    <molecule>Maximin-S4</molecule>
    <text>Maximin-S4.</text>
</comment>
<comment type="mass spectrometry" mass="1987.08" method="MALDI" evidence="3">
    <molecule>Maximin-S5</molecule>
    <text>Maximin-S5.</text>
</comment>
<comment type="similarity">
    <text evidence="4">Belongs to the maximin-S family.</text>
</comment>